<accession>Q11C35</accession>
<evidence type="ECO:0000255" key="1">
    <source>
        <dbReference type="HAMAP-Rule" id="MF_00381"/>
    </source>
</evidence>
<feature type="chain" id="PRO_1000060618" description="Integration host factor subunit beta">
    <location>
        <begin position="1"/>
        <end position="94"/>
    </location>
</feature>
<comment type="function">
    <text evidence="1">This protein is one of the two subunits of integration host factor, a specific DNA-binding protein that functions in genetic recombination as well as in transcriptional and translational control.</text>
</comment>
<comment type="subunit">
    <text evidence="1">Heterodimer of an alpha and a beta chain.</text>
</comment>
<comment type="similarity">
    <text evidence="1">Belongs to the bacterial histone-like protein family.</text>
</comment>
<protein>
    <recommendedName>
        <fullName evidence="1">Integration host factor subunit beta</fullName>
        <shortName evidence="1">IHF-beta</shortName>
    </recommendedName>
</protein>
<proteinExistence type="inferred from homology"/>
<organism>
    <name type="scientific">Chelativorans sp. (strain BNC1)</name>
    <dbReference type="NCBI Taxonomy" id="266779"/>
    <lineage>
        <taxon>Bacteria</taxon>
        <taxon>Pseudomonadati</taxon>
        <taxon>Pseudomonadota</taxon>
        <taxon>Alphaproteobacteria</taxon>
        <taxon>Hyphomicrobiales</taxon>
        <taxon>Phyllobacteriaceae</taxon>
        <taxon>Chelativorans</taxon>
    </lineage>
</organism>
<gene>
    <name evidence="1" type="primary">ihfB</name>
    <name evidence="1" type="synonym">himD</name>
    <name type="ordered locus">Meso_3672</name>
</gene>
<name>IHFB_CHESB</name>
<sequence length="94" mass="10776">MIKSELVQTIANRNPHLFLRDVENIVNAIFDEITEALAQGNRVELRGFGAFSVKNRPARTGRNPRTGESVHVEEKWVPFFKTGKELRERLNADE</sequence>
<keyword id="KW-0233">DNA recombination</keyword>
<keyword id="KW-0238">DNA-binding</keyword>
<keyword id="KW-0804">Transcription</keyword>
<keyword id="KW-0805">Transcription regulation</keyword>
<keyword id="KW-0810">Translation regulation</keyword>
<reference key="1">
    <citation type="submission" date="2006-06" db="EMBL/GenBank/DDBJ databases">
        <title>Complete sequence of chromosome of Mesorhizobium sp. BNC1.</title>
        <authorList>
            <consortium name="US DOE Joint Genome Institute"/>
            <person name="Copeland A."/>
            <person name="Lucas S."/>
            <person name="Lapidus A."/>
            <person name="Barry K."/>
            <person name="Detter J.C."/>
            <person name="Glavina del Rio T."/>
            <person name="Hammon N."/>
            <person name="Israni S."/>
            <person name="Dalin E."/>
            <person name="Tice H."/>
            <person name="Pitluck S."/>
            <person name="Chertkov O."/>
            <person name="Brettin T."/>
            <person name="Bruce D."/>
            <person name="Han C."/>
            <person name="Tapia R."/>
            <person name="Gilna P."/>
            <person name="Schmutz J."/>
            <person name="Larimer F."/>
            <person name="Land M."/>
            <person name="Hauser L."/>
            <person name="Kyrpides N."/>
            <person name="Mikhailova N."/>
            <person name="Richardson P."/>
        </authorList>
    </citation>
    <scope>NUCLEOTIDE SEQUENCE [LARGE SCALE GENOMIC DNA]</scope>
    <source>
        <strain>BNC1</strain>
    </source>
</reference>
<dbReference type="EMBL" id="CP000390">
    <property type="protein sequence ID" value="ABG65040.1"/>
    <property type="molecule type" value="Genomic_DNA"/>
</dbReference>
<dbReference type="SMR" id="Q11C35"/>
<dbReference type="STRING" id="266779.Meso_3672"/>
<dbReference type="KEGG" id="mes:Meso_3672"/>
<dbReference type="eggNOG" id="COG0776">
    <property type="taxonomic scope" value="Bacteria"/>
</dbReference>
<dbReference type="HOGENOM" id="CLU_105066_2_0_5"/>
<dbReference type="OrthoDB" id="9804203at2"/>
<dbReference type="GO" id="GO:0005694">
    <property type="term" value="C:chromosome"/>
    <property type="evidence" value="ECO:0007669"/>
    <property type="project" value="InterPro"/>
</dbReference>
<dbReference type="GO" id="GO:0005829">
    <property type="term" value="C:cytosol"/>
    <property type="evidence" value="ECO:0007669"/>
    <property type="project" value="TreeGrafter"/>
</dbReference>
<dbReference type="GO" id="GO:0003677">
    <property type="term" value="F:DNA binding"/>
    <property type="evidence" value="ECO:0007669"/>
    <property type="project" value="UniProtKB-UniRule"/>
</dbReference>
<dbReference type="GO" id="GO:0030527">
    <property type="term" value="F:structural constituent of chromatin"/>
    <property type="evidence" value="ECO:0007669"/>
    <property type="project" value="InterPro"/>
</dbReference>
<dbReference type="GO" id="GO:0006310">
    <property type="term" value="P:DNA recombination"/>
    <property type="evidence" value="ECO:0007669"/>
    <property type="project" value="UniProtKB-UniRule"/>
</dbReference>
<dbReference type="GO" id="GO:0006355">
    <property type="term" value="P:regulation of DNA-templated transcription"/>
    <property type="evidence" value="ECO:0007669"/>
    <property type="project" value="UniProtKB-UniRule"/>
</dbReference>
<dbReference type="GO" id="GO:0006417">
    <property type="term" value="P:regulation of translation"/>
    <property type="evidence" value="ECO:0007669"/>
    <property type="project" value="UniProtKB-UniRule"/>
</dbReference>
<dbReference type="CDD" id="cd13836">
    <property type="entry name" value="IHF_B"/>
    <property type="match status" value="1"/>
</dbReference>
<dbReference type="FunFam" id="4.10.520.10:FF:000008">
    <property type="entry name" value="Integration host factor subunit beta"/>
    <property type="match status" value="1"/>
</dbReference>
<dbReference type="Gene3D" id="4.10.520.10">
    <property type="entry name" value="IHF-like DNA-binding proteins"/>
    <property type="match status" value="1"/>
</dbReference>
<dbReference type="HAMAP" id="MF_00381">
    <property type="entry name" value="IHF_beta"/>
    <property type="match status" value="1"/>
</dbReference>
<dbReference type="InterPro" id="IPR000119">
    <property type="entry name" value="Hist_DNA-bd"/>
</dbReference>
<dbReference type="InterPro" id="IPR020816">
    <property type="entry name" value="Histone-like_DNA-bd_CS"/>
</dbReference>
<dbReference type="InterPro" id="IPR010992">
    <property type="entry name" value="IHF-like_DNA-bd_dom_sf"/>
</dbReference>
<dbReference type="InterPro" id="IPR005685">
    <property type="entry name" value="IHF_beta"/>
</dbReference>
<dbReference type="NCBIfam" id="TIGR00988">
    <property type="entry name" value="hip"/>
    <property type="match status" value="1"/>
</dbReference>
<dbReference type="NCBIfam" id="NF001222">
    <property type="entry name" value="PRK00199.1"/>
    <property type="match status" value="1"/>
</dbReference>
<dbReference type="PANTHER" id="PTHR33175">
    <property type="entry name" value="DNA-BINDING PROTEIN HU"/>
    <property type="match status" value="1"/>
</dbReference>
<dbReference type="PANTHER" id="PTHR33175:SF5">
    <property type="entry name" value="INTEGRATION HOST FACTOR SUBUNIT BETA"/>
    <property type="match status" value="1"/>
</dbReference>
<dbReference type="Pfam" id="PF00216">
    <property type="entry name" value="Bac_DNA_binding"/>
    <property type="match status" value="1"/>
</dbReference>
<dbReference type="PRINTS" id="PR01727">
    <property type="entry name" value="DNABINDINGHU"/>
</dbReference>
<dbReference type="SMART" id="SM00411">
    <property type="entry name" value="BHL"/>
    <property type="match status" value="1"/>
</dbReference>
<dbReference type="SUPFAM" id="SSF47729">
    <property type="entry name" value="IHF-like DNA-binding proteins"/>
    <property type="match status" value="1"/>
</dbReference>
<dbReference type="PROSITE" id="PS00045">
    <property type="entry name" value="HISTONE_LIKE"/>
    <property type="match status" value="1"/>
</dbReference>